<keyword id="KW-0963">Cytoplasm</keyword>
<keyword id="KW-0342">GTP-binding</keyword>
<keyword id="KW-0378">Hydrolase</keyword>
<keyword id="KW-0460">Magnesium</keyword>
<keyword id="KW-0479">Metal-binding</keyword>
<keyword id="KW-0547">Nucleotide-binding</keyword>
<keyword id="KW-1185">Reference proteome</keyword>
<accession>Q6MEQ6</accession>
<feature type="chain" id="PRO_0000386147" description="GTPase Obg">
    <location>
        <begin position="1"/>
        <end position="337"/>
    </location>
</feature>
<feature type="domain" description="Obg" evidence="2">
    <location>
        <begin position="1"/>
        <end position="158"/>
    </location>
</feature>
<feature type="domain" description="OBG-type G" evidence="1">
    <location>
        <begin position="159"/>
        <end position="330"/>
    </location>
</feature>
<feature type="binding site" evidence="1">
    <location>
        <begin position="165"/>
        <end position="172"/>
    </location>
    <ligand>
        <name>GTP</name>
        <dbReference type="ChEBI" id="CHEBI:37565"/>
    </ligand>
</feature>
<feature type="binding site" evidence="1">
    <location>
        <position position="172"/>
    </location>
    <ligand>
        <name>Mg(2+)</name>
        <dbReference type="ChEBI" id="CHEBI:18420"/>
    </ligand>
</feature>
<feature type="binding site" evidence="1">
    <location>
        <begin position="190"/>
        <end position="194"/>
    </location>
    <ligand>
        <name>GTP</name>
        <dbReference type="ChEBI" id="CHEBI:37565"/>
    </ligand>
</feature>
<feature type="binding site" evidence="1">
    <location>
        <position position="192"/>
    </location>
    <ligand>
        <name>Mg(2+)</name>
        <dbReference type="ChEBI" id="CHEBI:18420"/>
    </ligand>
</feature>
<feature type="binding site" evidence="1">
    <location>
        <begin position="212"/>
        <end position="215"/>
    </location>
    <ligand>
        <name>GTP</name>
        <dbReference type="ChEBI" id="CHEBI:37565"/>
    </ligand>
</feature>
<feature type="binding site" evidence="1">
    <location>
        <begin position="282"/>
        <end position="285"/>
    </location>
    <ligand>
        <name>GTP</name>
        <dbReference type="ChEBI" id="CHEBI:37565"/>
    </ligand>
</feature>
<feature type="binding site" evidence="1">
    <location>
        <begin position="311"/>
        <end position="313"/>
    </location>
    <ligand>
        <name>GTP</name>
        <dbReference type="ChEBI" id="CHEBI:37565"/>
    </ligand>
</feature>
<reference key="1">
    <citation type="journal article" date="2004" name="Science">
        <title>Illuminating the evolutionary history of chlamydiae.</title>
        <authorList>
            <person name="Horn M."/>
            <person name="Collingro A."/>
            <person name="Schmitz-Esser S."/>
            <person name="Beier C.L."/>
            <person name="Purkhold U."/>
            <person name="Fartmann B."/>
            <person name="Brandt P."/>
            <person name="Nyakatura G.J."/>
            <person name="Droege M."/>
            <person name="Frishman D."/>
            <person name="Rattei T."/>
            <person name="Mewes H.-W."/>
            <person name="Wagner M."/>
        </authorList>
    </citation>
    <scope>NUCLEOTIDE SEQUENCE [LARGE SCALE GENOMIC DNA]</scope>
    <source>
        <strain>UWE25</strain>
    </source>
</reference>
<organism>
    <name type="scientific">Protochlamydia amoebophila (strain UWE25)</name>
    <dbReference type="NCBI Taxonomy" id="264201"/>
    <lineage>
        <taxon>Bacteria</taxon>
        <taxon>Pseudomonadati</taxon>
        <taxon>Chlamydiota</taxon>
        <taxon>Chlamydiia</taxon>
        <taxon>Parachlamydiales</taxon>
        <taxon>Parachlamydiaceae</taxon>
        <taxon>Candidatus Protochlamydia</taxon>
    </lineage>
</organism>
<name>OBG_PARUW</name>
<dbReference type="EC" id="3.6.5.-" evidence="1"/>
<dbReference type="EMBL" id="BX908798">
    <property type="protein sequence ID" value="CAF22943.1"/>
    <property type="molecule type" value="Genomic_DNA"/>
</dbReference>
<dbReference type="RefSeq" id="WP_011174769.1">
    <property type="nucleotide sequence ID" value="NC_005861.2"/>
</dbReference>
<dbReference type="SMR" id="Q6MEQ6"/>
<dbReference type="STRING" id="264201.pc0219"/>
<dbReference type="KEGG" id="pcu:PC_RS01060"/>
<dbReference type="eggNOG" id="COG0536">
    <property type="taxonomic scope" value="Bacteria"/>
</dbReference>
<dbReference type="HOGENOM" id="CLU_011747_2_3_0"/>
<dbReference type="OrthoDB" id="9807318at2"/>
<dbReference type="Proteomes" id="UP000000529">
    <property type="component" value="Chromosome"/>
</dbReference>
<dbReference type="GO" id="GO:0005737">
    <property type="term" value="C:cytoplasm"/>
    <property type="evidence" value="ECO:0007669"/>
    <property type="project" value="UniProtKB-SubCell"/>
</dbReference>
<dbReference type="GO" id="GO:0005525">
    <property type="term" value="F:GTP binding"/>
    <property type="evidence" value="ECO:0007669"/>
    <property type="project" value="UniProtKB-UniRule"/>
</dbReference>
<dbReference type="GO" id="GO:0003924">
    <property type="term" value="F:GTPase activity"/>
    <property type="evidence" value="ECO:0007669"/>
    <property type="project" value="UniProtKB-UniRule"/>
</dbReference>
<dbReference type="GO" id="GO:0000287">
    <property type="term" value="F:magnesium ion binding"/>
    <property type="evidence" value="ECO:0007669"/>
    <property type="project" value="InterPro"/>
</dbReference>
<dbReference type="GO" id="GO:0042254">
    <property type="term" value="P:ribosome biogenesis"/>
    <property type="evidence" value="ECO:0007669"/>
    <property type="project" value="UniProtKB-UniRule"/>
</dbReference>
<dbReference type="CDD" id="cd01898">
    <property type="entry name" value="Obg"/>
    <property type="match status" value="1"/>
</dbReference>
<dbReference type="FunFam" id="2.70.210.12:FF:000001">
    <property type="entry name" value="GTPase Obg"/>
    <property type="match status" value="1"/>
</dbReference>
<dbReference type="Gene3D" id="2.70.210.12">
    <property type="entry name" value="GTP1/OBG domain"/>
    <property type="match status" value="1"/>
</dbReference>
<dbReference type="Gene3D" id="3.40.50.300">
    <property type="entry name" value="P-loop containing nucleotide triphosphate hydrolases"/>
    <property type="match status" value="1"/>
</dbReference>
<dbReference type="HAMAP" id="MF_01454">
    <property type="entry name" value="GTPase_Obg"/>
    <property type="match status" value="1"/>
</dbReference>
<dbReference type="InterPro" id="IPR031167">
    <property type="entry name" value="G_OBG"/>
</dbReference>
<dbReference type="InterPro" id="IPR006073">
    <property type="entry name" value="GTP-bd"/>
</dbReference>
<dbReference type="InterPro" id="IPR014100">
    <property type="entry name" value="GTP-bd_Obg/CgtA"/>
</dbReference>
<dbReference type="InterPro" id="IPR006169">
    <property type="entry name" value="GTP1_OBG_dom"/>
</dbReference>
<dbReference type="InterPro" id="IPR036726">
    <property type="entry name" value="GTP1_OBG_dom_sf"/>
</dbReference>
<dbReference type="InterPro" id="IPR045086">
    <property type="entry name" value="OBG_GTPase"/>
</dbReference>
<dbReference type="InterPro" id="IPR027417">
    <property type="entry name" value="P-loop_NTPase"/>
</dbReference>
<dbReference type="InterPro" id="IPR005225">
    <property type="entry name" value="Small_GTP-bd"/>
</dbReference>
<dbReference type="NCBIfam" id="TIGR02729">
    <property type="entry name" value="Obg_CgtA"/>
    <property type="match status" value="1"/>
</dbReference>
<dbReference type="NCBIfam" id="NF008955">
    <property type="entry name" value="PRK12297.1"/>
    <property type="match status" value="1"/>
</dbReference>
<dbReference type="NCBIfam" id="NF008956">
    <property type="entry name" value="PRK12299.1"/>
    <property type="match status" value="1"/>
</dbReference>
<dbReference type="NCBIfam" id="TIGR00231">
    <property type="entry name" value="small_GTP"/>
    <property type="match status" value="1"/>
</dbReference>
<dbReference type="PANTHER" id="PTHR11702">
    <property type="entry name" value="DEVELOPMENTALLY REGULATED GTP-BINDING PROTEIN-RELATED"/>
    <property type="match status" value="1"/>
</dbReference>
<dbReference type="PANTHER" id="PTHR11702:SF31">
    <property type="entry name" value="MITOCHONDRIAL RIBOSOME-ASSOCIATED GTPASE 2"/>
    <property type="match status" value="1"/>
</dbReference>
<dbReference type="Pfam" id="PF01018">
    <property type="entry name" value="GTP1_OBG"/>
    <property type="match status" value="1"/>
</dbReference>
<dbReference type="Pfam" id="PF01926">
    <property type="entry name" value="MMR_HSR1"/>
    <property type="match status" value="1"/>
</dbReference>
<dbReference type="PIRSF" id="PIRSF002401">
    <property type="entry name" value="GTP_bd_Obg/CgtA"/>
    <property type="match status" value="1"/>
</dbReference>
<dbReference type="PRINTS" id="PR00326">
    <property type="entry name" value="GTP1OBG"/>
</dbReference>
<dbReference type="SUPFAM" id="SSF82051">
    <property type="entry name" value="Obg GTP-binding protein N-terminal domain"/>
    <property type="match status" value="1"/>
</dbReference>
<dbReference type="SUPFAM" id="SSF52540">
    <property type="entry name" value="P-loop containing nucleoside triphosphate hydrolases"/>
    <property type="match status" value="1"/>
</dbReference>
<dbReference type="PROSITE" id="PS51710">
    <property type="entry name" value="G_OBG"/>
    <property type="match status" value="1"/>
</dbReference>
<dbReference type="PROSITE" id="PS51883">
    <property type="entry name" value="OBG"/>
    <property type="match status" value="1"/>
</dbReference>
<proteinExistence type="inferred from homology"/>
<gene>
    <name evidence="1" type="primary">obg</name>
    <name type="ordered locus">pc0219</name>
</gene>
<comment type="function">
    <text evidence="1">An essential GTPase which binds GTP, GDP and possibly (p)ppGpp with moderate affinity, with high nucleotide exchange rates and a fairly low GTP hydrolysis rate. Plays a role in control of the cell cycle, stress response, ribosome biogenesis and in those bacteria that undergo differentiation, in morphogenesis control.</text>
</comment>
<comment type="cofactor">
    <cofactor evidence="1">
        <name>Mg(2+)</name>
        <dbReference type="ChEBI" id="CHEBI:18420"/>
    </cofactor>
</comment>
<comment type="subunit">
    <text evidence="1">Monomer.</text>
</comment>
<comment type="subcellular location">
    <subcellularLocation>
        <location evidence="1">Cytoplasm</location>
    </subcellularLocation>
</comment>
<comment type="similarity">
    <text evidence="1">Belongs to the TRAFAC class OBG-HflX-like GTPase superfamily. OBG GTPase family.</text>
</comment>
<evidence type="ECO:0000255" key="1">
    <source>
        <dbReference type="HAMAP-Rule" id="MF_01454"/>
    </source>
</evidence>
<evidence type="ECO:0000255" key="2">
    <source>
        <dbReference type="PROSITE-ProRule" id="PRU01231"/>
    </source>
</evidence>
<protein>
    <recommendedName>
        <fullName evidence="1">GTPase Obg</fullName>
        <ecNumber evidence="1">3.6.5.-</ecNumber>
    </recommendedName>
    <alternativeName>
        <fullName evidence="1">GTP-binding protein Obg</fullName>
    </alternativeName>
</protein>
<sequence length="337" mass="37065">MFVDRVIIELIAGKGGNGVVAWRREKYIPKGGPAGGNGGRGGSVILEADTQISSLDWFRHRRILKAQSGGDGGGNCRQGKNGTDLILKVPCGTLLKDAKSGKVIHDFVEDKERFVLCKGGRGGRGNDSFKTPTHQAPNICTEGTLGEIHHIELELKLIADVGLVGFPNAGKSTLISSLAGLRVKVAAYPFTTLQPNLGFIELDNYKRIYIADIPGIIEGASHNRGLGLEFLRHIERTKLLIFILDASGIDGRTPSHDFRILREEIGAYNPELLERPYLVVLNKIDTEDSPSHIQEFEKNFSISSDMLFKISAVYGEGLQELIEKMTQRLSQKKEIEY</sequence>